<dbReference type="EMBL" id="AL021961">
    <property type="protein sequence ID" value="CAA17563.1"/>
    <property type="status" value="ALT_SEQ"/>
    <property type="molecule type" value="Genomic_DNA"/>
</dbReference>
<dbReference type="EMBL" id="AL161584">
    <property type="protein sequence ID" value="CAB80126.1"/>
    <property type="status" value="ALT_SEQ"/>
    <property type="molecule type" value="Genomic_DNA"/>
</dbReference>
<dbReference type="EMBL" id="CP002687">
    <property type="protein sequence ID" value="AEE86319.1"/>
    <property type="molecule type" value="Genomic_DNA"/>
</dbReference>
<dbReference type="EMBL" id="AF370544">
    <property type="protein sequence ID" value="AAK48971.1"/>
    <property type="molecule type" value="mRNA"/>
</dbReference>
<dbReference type="EMBL" id="AY081498">
    <property type="protein sequence ID" value="AAM10060.1"/>
    <property type="molecule type" value="mRNA"/>
</dbReference>
<dbReference type="EMBL" id="AK229149">
    <property type="protein sequence ID" value="BAF01023.1"/>
    <property type="molecule type" value="mRNA"/>
</dbReference>
<dbReference type="PIR" id="T05427">
    <property type="entry name" value="T05427"/>
</dbReference>
<dbReference type="RefSeq" id="NP_567951.1">
    <property type="nucleotide sequence ID" value="NM_119570.4"/>
</dbReference>
<dbReference type="SMR" id="Q94JY0"/>
<dbReference type="FunCoup" id="Q94JY0">
    <property type="interactions" value="1145"/>
</dbReference>
<dbReference type="STRING" id="3702.Q94JY0"/>
<dbReference type="iPTMnet" id="Q94JY0"/>
<dbReference type="DNASU" id="829555"/>
<dbReference type="EnsemblPlants" id="AT4G34090.1">
    <property type="protein sequence ID" value="AT4G34090.1"/>
    <property type="gene ID" value="AT4G34090"/>
</dbReference>
<dbReference type="GeneID" id="829555"/>
<dbReference type="Gramene" id="AT4G34090.1">
    <property type="protein sequence ID" value="AT4G34090.1"/>
    <property type="gene ID" value="AT4G34090"/>
</dbReference>
<dbReference type="KEGG" id="ath:AT4G34090"/>
<dbReference type="Araport" id="AT4G34090"/>
<dbReference type="TAIR" id="AT4G34090">
    <property type="gene designation" value="PAB"/>
</dbReference>
<dbReference type="InParanoid" id="Q94JY0"/>
<dbReference type="OMA" id="NIAQWED"/>
<dbReference type="OrthoDB" id="537706at2759"/>
<dbReference type="PhylomeDB" id="Q94JY0"/>
<dbReference type="PRO" id="PR:Q94JY0"/>
<dbReference type="Proteomes" id="UP000006548">
    <property type="component" value="Chromosome 4"/>
</dbReference>
<dbReference type="ExpressionAtlas" id="Q94JY0">
    <property type="expression patterns" value="baseline and differential"/>
</dbReference>
<dbReference type="GO" id="GO:0009570">
    <property type="term" value="C:chloroplast stroma"/>
    <property type="evidence" value="ECO:0000314"/>
    <property type="project" value="UniProtKB"/>
</dbReference>
<dbReference type="GO" id="GO:0033614">
    <property type="term" value="P:chloroplast proton-transporting ATP synthase complex assembly"/>
    <property type="evidence" value="ECO:0000315"/>
    <property type="project" value="UniProtKB"/>
</dbReference>
<dbReference type="InterPro" id="IPR045287">
    <property type="entry name" value="PAB"/>
</dbReference>
<dbReference type="PANTHER" id="PTHR35115">
    <property type="entry name" value="CYCLIN DELTA-3"/>
    <property type="match status" value="1"/>
</dbReference>
<dbReference type="PANTHER" id="PTHR35115:SF1">
    <property type="entry name" value="PROTEIN IN CHLOROPLAST ATPASE BIOGENESIS, CHLOROPLASTIC"/>
    <property type="match status" value="1"/>
</dbReference>
<accession>Q94JY0</accession>
<accession>O49495</accession>
<keyword id="KW-0150">Chloroplast</keyword>
<keyword id="KW-0934">Plastid</keyword>
<keyword id="KW-1185">Reference proteome</keyword>
<keyword id="KW-0809">Transit peptide</keyword>
<organism>
    <name type="scientific">Arabidopsis thaliana</name>
    <name type="common">Mouse-ear cress</name>
    <dbReference type="NCBI Taxonomy" id="3702"/>
    <lineage>
        <taxon>Eukaryota</taxon>
        <taxon>Viridiplantae</taxon>
        <taxon>Streptophyta</taxon>
        <taxon>Embryophyta</taxon>
        <taxon>Tracheophyta</taxon>
        <taxon>Spermatophyta</taxon>
        <taxon>Magnoliopsida</taxon>
        <taxon>eudicotyledons</taxon>
        <taxon>Gunneridae</taxon>
        <taxon>Pentapetalae</taxon>
        <taxon>rosids</taxon>
        <taxon>malvids</taxon>
        <taxon>Brassicales</taxon>
        <taxon>Brassicaceae</taxon>
        <taxon>Camelineae</taxon>
        <taxon>Arabidopsis</taxon>
    </lineage>
</organism>
<feature type="transit peptide" description="Chloroplast" evidence="1">
    <location>
        <begin position="1"/>
        <end position="35"/>
    </location>
</feature>
<feature type="chain" id="PRO_0000445239" description="Protein IN CHLOROPLAST ATPASE BIOGENESIS, chloroplastic">
    <location>
        <begin position="36"/>
        <end position="330"/>
    </location>
</feature>
<comment type="function">
    <text evidence="2">Involved in the assembly of the F(1) ATP synthase in chloroplast thylakoid membranes (PubMed:25775508). Functions downstream of the CPN60 chaperones to promote assembly of the catalytically active core of the chloroplast ATP synthase (PubMed:25775508). Assists the assembly of the ATP synthase gamma subunit into the active F(1) core downstream of CPN60-mediated folding, which is critical for the biogenesis of the chloroplast ATP synthase (PubMed:25775508).</text>
</comment>
<comment type="subunit">
    <text evidence="2">Interacts with ATPC1.</text>
</comment>
<comment type="subcellular location">
    <subcellularLocation>
        <location evidence="2">Plastid</location>
        <location evidence="2">Chloroplast stroma</location>
    </subcellularLocation>
</comment>
<comment type="disruption phenotype">
    <text evidence="2">Severe growth defects, and inability to flower and produce seeds.</text>
</comment>
<comment type="sequence caution" evidence="4">
    <conflict type="erroneous gene model prediction">
        <sequence resource="EMBL-CDS" id="CAA17563"/>
    </conflict>
</comment>
<comment type="sequence caution" evidence="4">
    <conflict type="erroneous gene model prediction">
        <sequence resource="EMBL-CDS" id="CAB80126"/>
    </conflict>
</comment>
<gene>
    <name evidence="3" type="primary">PAB</name>
    <name evidence="5" type="ordered locus">At4g34090</name>
</gene>
<name>PAB_ARATH</name>
<reference key="1">
    <citation type="journal article" date="1999" name="Nature">
        <title>Sequence and analysis of chromosome 4 of the plant Arabidopsis thaliana.</title>
        <authorList>
            <person name="Mayer K.F.X."/>
            <person name="Schueller C."/>
            <person name="Wambutt R."/>
            <person name="Murphy G."/>
            <person name="Volckaert G."/>
            <person name="Pohl T."/>
            <person name="Duesterhoeft A."/>
            <person name="Stiekema W."/>
            <person name="Entian K.-D."/>
            <person name="Terryn N."/>
            <person name="Harris B."/>
            <person name="Ansorge W."/>
            <person name="Brandt P."/>
            <person name="Grivell L.A."/>
            <person name="Rieger M."/>
            <person name="Weichselgartner M."/>
            <person name="de Simone V."/>
            <person name="Obermaier B."/>
            <person name="Mache R."/>
            <person name="Mueller M."/>
            <person name="Kreis M."/>
            <person name="Delseny M."/>
            <person name="Puigdomenech P."/>
            <person name="Watson M."/>
            <person name="Schmidtheini T."/>
            <person name="Reichert B."/>
            <person name="Portetelle D."/>
            <person name="Perez-Alonso M."/>
            <person name="Boutry M."/>
            <person name="Bancroft I."/>
            <person name="Vos P."/>
            <person name="Hoheisel J."/>
            <person name="Zimmermann W."/>
            <person name="Wedler H."/>
            <person name="Ridley P."/>
            <person name="Langham S.-A."/>
            <person name="McCullagh B."/>
            <person name="Bilham L."/>
            <person name="Robben J."/>
            <person name="van der Schueren J."/>
            <person name="Grymonprez B."/>
            <person name="Chuang Y.-J."/>
            <person name="Vandenbussche F."/>
            <person name="Braeken M."/>
            <person name="Weltjens I."/>
            <person name="Voet M."/>
            <person name="Bastiaens I."/>
            <person name="Aert R."/>
            <person name="Defoor E."/>
            <person name="Weitzenegger T."/>
            <person name="Bothe G."/>
            <person name="Ramsperger U."/>
            <person name="Hilbert H."/>
            <person name="Braun M."/>
            <person name="Holzer E."/>
            <person name="Brandt A."/>
            <person name="Peters S."/>
            <person name="van Staveren M."/>
            <person name="Dirkse W."/>
            <person name="Mooijman P."/>
            <person name="Klein Lankhorst R."/>
            <person name="Rose M."/>
            <person name="Hauf J."/>
            <person name="Koetter P."/>
            <person name="Berneiser S."/>
            <person name="Hempel S."/>
            <person name="Feldpausch M."/>
            <person name="Lamberth S."/>
            <person name="Van den Daele H."/>
            <person name="De Keyser A."/>
            <person name="Buysshaert C."/>
            <person name="Gielen J."/>
            <person name="Villarroel R."/>
            <person name="De Clercq R."/>
            <person name="van Montagu M."/>
            <person name="Rogers J."/>
            <person name="Cronin A."/>
            <person name="Quail M.A."/>
            <person name="Bray-Allen S."/>
            <person name="Clark L."/>
            <person name="Doggett J."/>
            <person name="Hall S."/>
            <person name="Kay M."/>
            <person name="Lennard N."/>
            <person name="McLay K."/>
            <person name="Mayes R."/>
            <person name="Pettett A."/>
            <person name="Rajandream M.A."/>
            <person name="Lyne M."/>
            <person name="Benes V."/>
            <person name="Rechmann S."/>
            <person name="Borkova D."/>
            <person name="Bloecker H."/>
            <person name="Scharfe M."/>
            <person name="Grimm M."/>
            <person name="Loehnert T.-H."/>
            <person name="Dose S."/>
            <person name="de Haan M."/>
            <person name="Maarse A.C."/>
            <person name="Schaefer M."/>
            <person name="Mueller-Auer S."/>
            <person name="Gabel C."/>
            <person name="Fuchs M."/>
            <person name="Fartmann B."/>
            <person name="Granderath K."/>
            <person name="Dauner D."/>
            <person name="Herzl A."/>
            <person name="Neumann S."/>
            <person name="Argiriou A."/>
            <person name="Vitale D."/>
            <person name="Liguori R."/>
            <person name="Piravandi E."/>
            <person name="Massenet O."/>
            <person name="Quigley F."/>
            <person name="Clabauld G."/>
            <person name="Muendlein A."/>
            <person name="Felber R."/>
            <person name="Schnabl S."/>
            <person name="Hiller R."/>
            <person name="Schmidt W."/>
            <person name="Lecharny A."/>
            <person name="Aubourg S."/>
            <person name="Chefdor F."/>
            <person name="Cooke R."/>
            <person name="Berger C."/>
            <person name="Monfort A."/>
            <person name="Casacuberta E."/>
            <person name="Gibbons T."/>
            <person name="Weber N."/>
            <person name="Vandenbol M."/>
            <person name="Bargues M."/>
            <person name="Terol J."/>
            <person name="Torres A."/>
            <person name="Perez-Perez A."/>
            <person name="Purnelle B."/>
            <person name="Bent E."/>
            <person name="Johnson S."/>
            <person name="Tacon D."/>
            <person name="Jesse T."/>
            <person name="Heijnen L."/>
            <person name="Schwarz S."/>
            <person name="Scholler P."/>
            <person name="Heber S."/>
            <person name="Francs P."/>
            <person name="Bielke C."/>
            <person name="Frishman D."/>
            <person name="Haase D."/>
            <person name="Lemcke K."/>
            <person name="Mewes H.-W."/>
            <person name="Stocker S."/>
            <person name="Zaccaria P."/>
            <person name="Bevan M."/>
            <person name="Wilson R.K."/>
            <person name="de la Bastide M."/>
            <person name="Habermann K."/>
            <person name="Parnell L."/>
            <person name="Dedhia N."/>
            <person name="Gnoj L."/>
            <person name="Schutz K."/>
            <person name="Huang E."/>
            <person name="Spiegel L."/>
            <person name="Sekhon M."/>
            <person name="Murray J."/>
            <person name="Sheet P."/>
            <person name="Cordes M."/>
            <person name="Abu-Threideh J."/>
            <person name="Stoneking T."/>
            <person name="Kalicki J."/>
            <person name="Graves T."/>
            <person name="Harmon G."/>
            <person name="Edwards J."/>
            <person name="Latreille P."/>
            <person name="Courtney L."/>
            <person name="Cloud J."/>
            <person name="Abbott A."/>
            <person name="Scott K."/>
            <person name="Johnson D."/>
            <person name="Minx P."/>
            <person name="Bentley D."/>
            <person name="Fulton B."/>
            <person name="Miller N."/>
            <person name="Greco T."/>
            <person name="Kemp K."/>
            <person name="Kramer J."/>
            <person name="Fulton L."/>
            <person name="Mardis E."/>
            <person name="Dante M."/>
            <person name="Pepin K."/>
            <person name="Hillier L.W."/>
            <person name="Nelson J."/>
            <person name="Spieth J."/>
            <person name="Ryan E."/>
            <person name="Andrews S."/>
            <person name="Geisel C."/>
            <person name="Layman D."/>
            <person name="Du H."/>
            <person name="Ali J."/>
            <person name="Berghoff A."/>
            <person name="Jones K."/>
            <person name="Drone K."/>
            <person name="Cotton M."/>
            <person name="Joshu C."/>
            <person name="Antonoiu B."/>
            <person name="Zidanic M."/>
            <person name="Strong C."/>
            <person name="Sun H."/>
            <person name="Lamar B."/>
            <person name="Yordan C."/>
            <person name="Ma P."/>
            <person name="Zhong J."/>
            <person name="Preston R."/>
            <person name="Vil D."/>
            <person name="Shekher M."/>
            <person name="Matero A."/>
            <person name="Shah R."/>
            <person name="Swaby I.K."/>
            <person name="O'Shaughnessy A."/>
            <person name="Rodriguez M."/>
            <person name="Hoffman J."/>
            <person name="Till S."/>
            <person name="Granat S."/>
            <person name="Shohdy N."/>
            <person name="Hasegawa A."/>
            <person name="Hameed A."/>
            <person name="Lodhi M."/>
            <person name="Johnson A."/>
            <person name="Chen E."/>
            <person name="Marra M.A."/>
            <person name="Martienssen R."/>
            <person name="McCombie W.R."/>
        </authorList>
    </citation>
    <scope>NUCLEOTIDE SEQUENCE [LARGE SCALE GENOMIC DNA]</scope>
    <source>
        <strain>cv. Columbia</strain>
    </source>
</reference>
<reference key="2">
    <citation type="journal article" date="2017" name="Plant J.">
        <title>Araport11: a complete reannotation of the Arabidopsis thaliana reference genome.</title>
        <authorList>
            <person name="Cheng C.Y."/>
            <person name="Krishnakumar V."/>
            <person name="Chan A.P."/>
            <person name="Thibaud-Nissen F."/>
            <person name="Schobel S."/>
            <person name="Town C.D."/>
        </authorList>
    </citation>
    <scope>GENOME REANNOTATION</scope>
    <source>
        <strain>cv. Columbia</strain>
    </source>
</reference>
<reference key="3">
    <citation type="journal article" date="2003" name="Science">
        <title>Empirical analysis of transcriptional activity in the Arabidopsis genome.</title>
        <authorList>
            <person name="Yamada K."/>
            <person name="Lim J."/>
            <person name="Dale J.M."/>
            <person name="Chen H."/>
            <person name="Shinn P."/>
            <person name="Palm C.J."/>
            <person name="Southwick A.M."/>
            <person name="Wu H.C."/>
            <person name="Kim C.J."/>
            <person name="Nguyen M."/>
            <person name="Pham P.K."/>
            <person name="Cheuk R.F."/>
            <person name="Karlin-Newmann G."/>
            <person name="Liu S.X."/>
            <person name="Lam B."/>
            <person name="Sakano H."/>
            <person name="Wu T."/>
            <person name="Yu G."/>
            <person name="Miranda M."/>
            <person name="Quach H.L."/>
            <person name="Tripp M."/>
            <person name="Chang C.H."/>
            <person name="Lee J.M."/>
            <person name="Toriumi M.J."/>
            <person name="Chan M.M."/>
            <person name="Tang C.C."/>
            <person name="Onodera C.S."/>
            <person name="Deng J.M."/>
            <person name="Akiyama K."/>
            <person name="Ansari Y."/>
            <person name="Arakawa T."/>
            <person name="Banh J."/>
            <person name="Banno F."/>
            <person name="Bowser L."/>
            <person name="Brooks S.Y."/>
            <person name="Carninci P."/>
            <person name="Chao Q."/>
            <person name="Choy N."/>
            <person name="Enju A."/>
            <person name="Goldsmith A.D."/>
            <person name="Gurjal M."/>
            <person name="Hansen N.F."/>
            <person name="Hayashizaki Y."/>
            <person name="Johnson-Hopson C."/>
            <person name="Hsuan V.W."/>
            <person name="Iida K."/>
            <person name="Karnes M."/>
            <person name="Khan S."/>
            <person name="Koesema E."/>
            <person name="Ishida J."/>
            <person name="Jiang P.X."/>
            <person name="Jones T."/>
            <person name="Kawai J."/>
            <person name="Kamiya A."/>
            <person name="Meyers C."/>
            <person name="Nakajima M."/>
            <person name="Narusaka M."/>
            <person name="Seki M."/>
            <person name="Sakurai T."/>
            <person name="Satou M."/>
            <person name="Tamse R."/>
            <person name="Vaysberg M."/>
            <person name="Wallender E.K."/>
            <person name="Wong C."/>
            <person name="Yamamura Y."/>
            <person name="Yuan S."/>
            <person name="Shinozaki K."/>
            <person name="Davis R.W."/>
            <person name="Theologis A."/>
            <person name="Ecker J.R."/>
        </authorList>
    </citation>
    <scope>NUCLEOTIDE SEQUENCE [LARGE SCALE MRNA]</scope>
    <source>
        <strain>cv. Columbia</strain>
    </source>
</reference>
<reference key="4">
    <citation type="submission" date="2006-07" db="EMBL/GenBank/DDBJ databases">
        <title>Large-scale analysis of RIKEN Arabidopsis full-length (RAFL) cDNAs.</title>
        <authorList>
            <person name="Totoki Y."/>
            <person name="Seki M."/>
            <person name="Ishida J."/>
            <person name="Nakajima M."/>
            <person name="Enju A."/>
            <person name="Kamiya A."/>
            <person name="Narusaka M."/>
            <person name="Shin-i T."/>
            <person name="Nakagawa M."/>
            <person name="Sakamoto N."/>
            <person name="Oishi K."/>
            <person name="Kohara Y."/>
            <person name="Kobayashi M."/>
            <person name="Toyoda A."/>
            <person name="Sakaki Y."/>
            <person name="Sakurai T."/>
            <person name="Iida K."/>
            <person name="Akiyama K."/>
            <person name="Satou M."/>
            <person name="Toyoda T."/>
            <person name="Konagaya A."/>
            <person name="Carninci P."/>
            <person name="Kawai J."/>
            <person name="Hayashizaki Y."/>
            <person name="Shinozaki K."/>
        </authorList>
    </citation>
    <scope>NUCLEOTIDE SEQUENCE [LARGE SCALE MRNA]</scope>
    <source>
        <strain>cv. Columbia</strain>
    </source>
</reference>
<reference key="5">
    <citation type="journal article" date="2015" name="Proc. Natl. Acad. Sci. U.S.A.">
        <title>PAB is an assembly chaperone that functions downstream of chaperonin 60 in the assembly of chloroplast ATP synthase coupling factor 1.</title>
        <authorList>
            <person name="Mao J."/>
            <person name="Chi W."/>
            <person name="Ouyang M."/>
            <person name="He B."/>
            <person name="Chen F."/>
            <person name="Zhang L."/>
        </authorList>
    </citation>
    <scope>FUNCTION</scope>
    <scope>INTERACTION WITH ATPC1</scope>
    <scope>SUBCELLULAR LOCATION</scope>
    <scope>DISRUPTION PHENOTYPE</scope>
</reference>
<evidence type="ECO:0000255" key="1"/>
<evidence type="ECO:0000269" key="2">
    <source>
    </source>
</evidence>
<evidence type="ECO:0000303" key="3">
    <source>
    </source>
</evidence>
<evidence type="ECO:0000305" key="4"/>
<evidence type="ECO:0000312" key="5">
    <source>
        <dbReference type="Araport" id="AT4G34090"/>
    </source>
</evidence>
<protein>
    <recommendedName>
        <fullName evidence="3">Protein IN CHLOROPLAST ATPASE BIOGENESIS, chloroplastic</fullName>
    </recommendedName>
</protein>
<sequence length="330" mass="36909">MGSISMHITPSTALPIRHFRARVSCCSSGHVSFIKDVAATEPPMHLHHLLKVLQTRGETIISPGAKQGLIPLAIPLSKNSSGSVTALLRWPTAPPGMDMPVVEVWRSGVRLIARNVDEYIHRILVEEDAQELTELYRASGEAGEKLYEKGAFAESEIDNLDVYVLKKVGLFPDLLERKVLRHFDEGDHVSAMVTGEFYTKKDLFPGFGRPFVYYANILQKVGRNVEAKDAARVALRSPWWTLGCPYEEVASIAQWEDEQIEFIREKVSDEGRFEDLHKGKAPIQVALDVAAFLLDLASIEGTWSESLNHIAKCYEEAGLHHISNFVLYTD</sequence>
<proteinExistence type="evidence at protein level"/>